<dbReference type="SMR" id="P55897"/>
<dbReference type="GO" id="GO:0000786">
    <property type="term" value="C:nucleosome"/>
    <property type="evidence" value="ECO:0007669"/>
    <property type="project" value="UniProtKB-KW"/>
</dbReference>
<dbReference type="GO" id="GO:0005634">
    <property type="term" value="C:nucleus"/>
    <property type="evidence" value="ECO:0007669"/>
    <property type="project" value="UniProtKB-SubCell"/>
</dbReference>
<dbReference type="GO" id="GO:0003677">
    <property type="term" value="F:DNA binding"/>
    <property type="evidence" value="ECO:0007669"/>
    <property type="project" value="UniProtKB-KW"/>
</dbReference>
<dbReference type="GO" id="GO:0046982">
    <property type="term" value="F:protein heterodimerization activity"/>
    <property type="evidence" value="ECO:0007669"/>
    <property type="project" value="InterPro"/>
</dbReference>
<dbReference type="GO" id="GO:0042742">
    <property type="term" value="P:defense response to bacterium"/>
    <property type="evidence" value="ECO:0007669"/>
    <property type="project" value="UniProtKB-KW"/>
</dbReference>
<dbReference type="GO" id="GO:0050832">
    <property type="term" value="P:defense response to fungus"/>
    <property type="evidence" value="ECO:0007669"/>
    <property type="project" value="UniProtKB-KW"/>
</dbReference>
<dbReference type="GO" id="GO:0031640">
    <property type="term" value="P:killing of cells of another organism"/>
    <property type="evidence" value="ECO:0007669"/>
    <property type="project" value="UniProtKB-KW"/>
</dbReference>
<dbReference type="Gene3D" id="1.10.20.10">
    <property type="entry name" value="Histone, subunit A"/>
    <property type="match status" value="1"/>
</dbReference>
<dbReference type="InterPro" id="IPR009072">
    <property type="entry name" value="Histone-fold"/>
</dbReference>
<dbReference type="InterPro" id="IPR032458">
    <property type="entry name" value="Histone_H2A_CS"/>
</dbReference>
<dbReference type="SUPFAM" id="SSF47113">
    <property type="entry name" value="Histone-fold"/>
    <property type="match status" value="1"/>
</dbReference>
<dbReference type="PROSITE" id="PS00046">
    <property type="entry name" value="HISTONE_H2A"/>
    <property type="match status" value="1"/>
</dbReference>
<comment type="function">
    <text>Core component of nucleosome. Nucleosomes wrap and compact DNA into chromatin, limiting DNA accessibility to the cellular machineries which require DNA as a template. Histones thereby play a central role in transcription regulation, DNA repair, DNA replication and chromosomal stability. DNA accessibility is regulated via a complex set of post-translational modifications of histones, also called histone code, and nucleosome remodeling.</text>
</comment>
<comment type="function">
    <text>Buforins are strong antimicrobial activities in vitro against a broad-spectrum of microorganisms including fungi. Buforin II is more potent than buforin I.</text>
</comment>
<comment type="subunit">
    <text>The nucleosome is a histone octamer containing two molecules each of H2A, H2B, H3 and H4 assembled in one H3-H4 heterotetramer and two H2A-H2B heterodimers. The octamer wraps approximately 147 bp of DNA.</text>
</comment>
<comment type="subcellular location">
    <subcellularLocation>
        <location>Nucleus</location>
    </subcellularLocation>
    <subcellularLocation>
        <location>Chromosome</location>
    </subcellularLocation>
</comment>
<comment type="PTM">
    <text evidence="1">Monoubiquitination of C-terminus gives a specific tag for epigenetic transcriptional repression. Following DNA double-strand breaks (DSBs), it is ubiquitinated through 'Lys-63' linkage of ubiquitin moieties (By similarity).</text>
</comment>
<comment type="similarity">
    <text evidence="5">Belongs to the histone H2A family.</text>
</comment>
<proteinExistence type="evidence at protein level"/>
<accession>P55897</accession>
<reference key="1">
    <citation type="journal article" date="1996" name="Biochem. Biophys. Res. Commun.">
        <title>A novel antimicrobial peptide from Bufo bufo gargarizans.</title>
        <authorList>
            <person name="Park C.B."/>
            <person name="Kim M.S."/>
            <person name="Kim S.C."/>
        </authorList>
    </citation>
    <scope>PROTEIN SEQUENCE</scope>
    <source>
        <tissue>Stomach</tissue>
    </source>
</reference>
<reference key="2">
    <citation type="journal article" date="1996" name="FEBS Lett.">
        <title>Solution structure of an antimicrobial peptide buforin II.</title>
        <authorList>
            <person name="Yi G.-S."/>
            <person name="Park C.B."/>
            <person name="Kim S.C."/>
            <person name="Cheong C."/>
        </authorList>
    </citation>
    <scope>STRUCTURE BY NMR OF 16-36</scope>
</reference>
<name>H2A_BUFGR</name>
<evidence type="ECO:0000250" key="1"/>
<evidence type="ECO:0000250" key="2">
    <source>
        <dbReference type="UniProtKB" id="P0C0S5"/>
    </source>
</evidence>
<evidence type="ECO:0000250" key="3">
    <source>
        <dbReference type="UniProtKB" id="P0C0S8"/>
    </source>
</evidence>
<evidence type="ECO:0000256" key="4">
    <source>
        <dbReference type="SAM" id="MobiDB-lite"/>
    </source>
</evidence>
<evidence type="ECO:0000305" key="5"/>
<protein>
    <recommendedName>
        <fullName>Histone H2A</fullName>
    </recommendedName>
    <component>
        <recommendedName>
            <fullName>Buforin-1</fullName>
        </recommendedName>
        <alternativeName>
            <fullName>Buforin I</fullName>
        </alternativeName>
    </component>
    <component>
        <recommendedName>
            <fullName>Buforin-2</fullName>
        </recommendedName>
        <alternativeName>
            <fullName>Buforin II</fullName>
        </alternativeName>
    </component>
</protein>
<sequence>AGRGKQGGKVRAKAKTRSSRAGLQFPVGRVHRLLRKGNY</sequence>
<keyword id="KW-0007">Acetylation</keyword>
<keyword id="KW-0044">Antibiotic</keyword>
<keyword id="KW-0929">Antimicrobial</keyword>
<keyword id="KW-0158">Chromosome</keyword>
<keyword id="KW-0903">Direct protein sequencing</keyword>
<keyword id="KW-0238">DNA-binding</keyword>
<keyword id="KW-0295">Fungicide</keyword>
<keyword id="KW-0379">Hydroxylation</keyword>
<keyword id="KW-1017">Isopeptide bond</keyword>
<keyword id="KW-0544">Nucleosome core</keyword>
<keyword id="KW-0539">Nucleus</keyword>
<keyword id="KW-0832">Ubl conjugation</keyword>
<feature type="peptide" id="PRO_0000013167" description="Buforin-1">
    <location>
        <begin position="1"/>
        <end position="39"/>
    </location>
</feature>
<feature type="peptide" id="PRO_0000013168" description="Buforin-2">
    <location>
        <begin position="16"/>
        <end position="36"/>
    </location>
</feature>
<feature type="region of interest" description="Disordered" evidence="4">
    <location>
        <begin position="1"/>
        <end position="24"/>
    </location>
</feature>
<feature type="compositionally biased region" description="Basic residues" evidence="4">
    <location>
        <begin position="1"/>
        <end position="18"/>
    </location>
</feature>
<feature type="modified residue" description="N6-(2-hydroxyisobutyryl)lysine" evidence="3">
    <location>
        <position position="5"/>
    </location>
</feature>
<feature type="modified residue" description="N6-acetyllysine" evidence="1">
    <location>
        <position position="5"/>
    </location>
</feature>
<feature type="modified residue" description="N6-(2-hydroxyisobutyryl)lysine; alternate" evidence="3">
    <location>
        <position position="9"/>
    </location>
</feature>
<feature type="modified residue" description="N6-lactoyllysine; alternate" evidence="2">
    <location>
        <position position="9"/>
    </location>
</feature>
<feature type="modified residue" description="N6-succinyllysine" evidence="3">
    <location>
        <position position="9"/>
    </location>
</feature>
<feature type="modified residue" description="N6-(2-hydroxyisobutyryl)lysine; alternate" evidence="3">
    <location>
        <position position="36"/>
    </location>
</feature>
<feature type="cross-link" description="Glycyl lysine isopeptide (Lys-Gly) (interchain with G-Cter in ubiquitin)" evidence="1">
    <location>
        <position position="13"/>
    </location>
</feature>
<feature type="cross-link" description="Glycyl lysine isopeptide (Lys-Gly) (interchain with G-Cter in ubiquitin)" evidence="1">
    <location>
        <position position="15"/>
    </location>
</feature>
<feature type="non-terminal residue">
    <location>
        <position position="39"/>
    </location>
</feature>
<organism>
    <name type="scientific">Bufo gargarizans</name>
    <name type="common">Asian toad</name>
    <name type="synonym">Bufo bufo gargarizans</name>
    <dbReference type="NCBI Taxonomy" id="30331"/>
    <lineage>
        <taxon>Eukaryota</taxon>
        <taxon>Metazoa</taxon>
        <taxon>Chordata</taxon>
        <taxon>Craniata</taxon>
        <taxon>Vertebrata</taxon>
        <taxon>Euteleostomi</taxon>
        <taxon>Amphibia</taxon>
        <taxon>Batrachia</taxon>
        <taxon>Anura</taxon>
        <taxon>Neobatrachia</taxon>
        <taxon>Hyloidea</taxon>
        <taxon>Bufonidae</taxon>
        <taxon>Bufo</taxon>
    </lineage>
</organism>